<proteinExistence type="inferred from homology"/>
<accession>Q2R0Z3</accession>
<accession>A0A0N7KT86</accession>
<keyword id="KW-0238">DNA-binding</keyword>
<keyword id="KW-0539">Nucleus</keyword>
<keyword id="KW-1185">Reference proteome</keyword>
<keyword id="KW-0677">Repeat</keyword>
<keyword id="KW-0804">Transcription</keyword>
<keyword id="KW-0805">Transcription regulation</keyword>
<sequence>MTVELEKIAGSFFISKGWKTFVHRTGLLSGQYIRFQVLTPSKINVLLFDKKKDSKLPMIPSSKKQIKTAPKRSTGITINDMPTSKHASMLISHTSNKETSSDSRTESMTDIPSSSDNSAVTPDIKNYISIIGQFLQRSSKFYIVTMNNTFMKQDRLVEAAGSDSVTMLLHKSSDDRCNLKRGWATFAATNAIHLHSVCIFHFYKAPNVKITIDVL</sequence>
<dbReference type="EMBL" id="DP000010">
    <property type="protein sequence ID" value="ABA94879.1"/>
    <property type="molecule type" value="Genomic_DNA"/>
</dbReference>
<dbReference type="EMBL" id="AP008217">
    <property type="status" value="NOT_ANNOTATED_CDS"/>
    <property type="molecule type" value="Genomic_DNA"/>
</dbReference>
<dbReference type="EMBL" id="AP014967">
    <property type="protein sequence ID" value="BAT14922.1"/>
    <property type="molecule type" value="Genomic_DNA"/>
</dbReference>
<dbReference type="SMR" id="Q2R0Z3"/>
<dbReference type="PaxDb" id="39947-Q2R0Z3"/>
<dbReference type="EnsemblPlants" id="Os11t0625400-00">
    <property type="protein sequence ID" value="Os11t0625400-00"/>
    <property type="gene ID" value="Os11g0625400"/>
</dbReference>
<dbReference type="Gramene" id="Os11t0625400-00">
    <property type="protein sequence ID" value="Os11t0625400-00"/>
    <property type="gene ID" value="Os11g0625400"/>
</dbReference>
<dbReference type="HOGENOM" id="CLU_075934_0_0_1"/>
<dbReference type="InParanoid" id="Q2R0Z3"/>
<dbReference type="Proteomes" id="UP000000763">
    <property type="component" value="Chromosome 11"/>
</dbReference>
<dbReference type="Proteomes" id="UP000059680">
    <property type="component" value="Chromosome 11"/>
</dbReference>
<dbReference type="GO" id="GO:0005634">
    <property type="term" value="C:nucleus"/>
    <property type="evidence" value="ECO:0007669"/>
    <property type="project" value="UniProtKB-SubCell"/>
</dbReference>
<dbReference type="GO" id="GO:0003677">
    <property type="term" value="F:DNA binding"/>
    <property type="evidence" value="ECO:0007669"/>
    <property type="project" value="UniProtKB-KW"/>
</dbReference>
<dbReference type="Gene3D" id="2.40.330.10">
    <property type="entry name" value="DNA-binding pseudobarrel domain"/>
    <property type="match status" value="2"/>
</dbReference>
<dbReference type="InterPro" id="IPR003340">
    <property type="entry name" value="B3_DNA-bd"/>
</dbReference>
<dbReference type="InterPro" id="IPR015300">
    <property type="entry name" value="DNA-bd_pseudobarrel_sf"/>
</dbReference>
<dbReference type="InterPro" id="IPR050655">
    <property type="entry name" value="Plant_B3_domain"/>
</dbReference>
<dbReference type="PANTHER" id="PTHR31920">
    <property type="entry name" value="B3 DOMAIN-CONTAINING"/>
    <property type="match status" value="1"/>
</dbReference>
<dbReference type="PANTHER" id="PTHR31920:SF122">
    <property type="entry name" value="B3 DOMAIN-CONTAINING PROTEIN REM23"/>
    <property type="match status" value="1"/>
</dbReference>
<dbReference type="SUPFAM" id="SSF101936">
    <property type="entry name" value="DNA-binding pseudobarrel domain"/>
    <property type="match status" value="2"/>
</dbReference>
<dbReference type="PROSITE" id="PS50863">
    <property type="entry name" value="B3"/>
    <property type="match status" value="2"/>
</dbReference>
<gene>
    <name type="ordered locus">Os11g0625400</name>
    <name type="ordered locus">LOC_Os11g40900</name>
</gene>
<feature type="chain" id="PRO_0000376988" description="Putative B3 domain-containing protein Os11g0625400">
    <location>
        <begin position="1"/>
        <end position="215"/>
    </location>
</feature>
<feature type="DNA-binding region" description="TF-B3 1" evidence="1">
    <location>
        <begin position="1"/>
        <end position="51"/>
    </location>
</feature>
<feature type="DNA-binding region" description="TF-B3 2" evidence="1">
    <location>
        <begin position="123"/>
        <end position="215"/>
    </location>
</feature>
<feature type="region of interest" description="Disordered" evidence="2">
    <location>
        <begin position="92"/>
        <end position="117"/>
    </location>
</feature>
<feature type="compositionally biased region" description="Basic and acidic residues" evidence="2">
    <location>
        <begin position="95"/>
        <end position="107"/>
    </location>
</feature>
<feature type="compositionally biased region" description="Polar residues" evidence="2">
    <location>
        <begin position="108"/>
        <end position="117"/>
    </location>
</feature>
<protein>
    <recommendedName>
        <fullName>Putative B3 domain-containing protein Os11g0625400</fullName>
    </recommendedName>
</protein>
<comment type="subcellular location">
    <subcellularLocation>
        <location evidence="1">Nucleus</location>
    </subcellularLocation>
</comment>
<organism>
    <name type="scientific">Oryza sativa subsp. japonica</name>
    <name type="common">Rice</name>
    <dbReference type="NCBI Taxonomy" id="39947"/>
    <lineage>
        <taxon>Eukaryota</taxon>
        <taxon>Viridiplantae</taxon>
        <taxon>Streptophyta</taxon>
        <taxon>Embryophyta</taxon>
        <taxon>Tracheophyta</taxon>
        <taxon>Spermatophyta</taxon>
        <taxon>Magnoliopsida</taxon>
        <taxon>Liliopsida</taxon>
        <taxon>Poales</taxon>
        <taxon>Poaceae</taxon>
        <taxon>BOP clade</taxon>
        <taxon>Oryzoideae</taxon>
        <taxon>Oryzeae</taxon>
        <taxon>Oryzinae</taxon>
        <taxon>Oryza</taxon>
        <taxon>Oryza sativa</taxon>
    </lineage>
</organism>
<evidence type="ECO:0000255" key="1">
    <source>
        <dbReference type="PROSITE-ProRule" id="PRU00326"/>
    </source>
</evidence>
<evidence type="ECO:0000256" key="2">
    <source>
        <dbReference type="SAM" id="MobiDB-lite"/>
    </source>
</evidence>
<reference key="1">
    <citation type="journal article" date="2005" name="BMC Biol.">
        <title>The sequence of rice chromosomes 11 and 12, rich in disease resistance genes and recent gene duplications.</title>
        <authorList>
            <consortium name="The rice chromosomes 11 and 12 sequencing consortia"/>
        </authorList>
    </citation>
    <scope>NUCLEOTIDE SEQUENCE [LARGE SCALE GENOMIC DNA]</scope>
    <source>
        <strain>cv. Nipponbare</strain>
    </source>
</reference>
<reference key="2">
    <citation type="journal article" date="2005" name="Nature">
        <title>The map-based sequence of the rice genome.</title>
        <authorList>
            <consortium name="International rice genome sequencing project (IRGSP)"/>
        </authorList>
    </citation>
    <scope>NUCLEOTIDE SEQUENCE [LARGE SCALE GENOMIC DNA]</scope>
    <source>
        <strain>cv. Nipponbare</strain>
    </source>
</reference>
<reference key="3">
    <citation type="journal article" date="2008" name="Nucleic Acids Res.">
        <title>The rice annotation project database (RAP-DB): 2008 update.</title>
        <authorList>
            <consortium name="The rice annotation project (RAP)"/>
        </authorList>
    </citation>
    <scope>GENOME REANNOTATION</scope>
    <source>
        <strain>cv. Nipponbare</strain>
    </source>
</reference>
<reference key="4">
    <citation type="journal article" date="2013" name="Rice">
        <title>Improvement of the Oryza sativa Nipponbare reference genome using next generation sequence and optical map data.</title>
        <authorList>
            <person name="Kawahara Y."/>
            <person name="de la Bastide M."/>
            <person name="Hamilton J.P."/>
            <person name="Kanamori H."/>
            <person name="McCombie W.R."/>
            <person name="Ouyang S."/>
            <person name="Schwartz D.C."/>
            <person name="Tanaka T."/>
            <person name="Wu J."/>
            <person name="Zhou S."/>
            <person name="Childs K.L."/>
            <person name="Davidson R.M."/>
            <person name="Lin H."/>
            <person name="Quesada-Ocampo L."/>
            <person name="Vaillancourt B."/>
            <person name="Sakai H."/>
            <person name="Lee S.S."/>
            <person name="Kim J."/>
            <person name="Numa H."/>
            <person name="Itoh T."/>
            <person name="Buell C.R."/>
            <person name="Matsumoto T."/>
        </authorList>
    </citation>
    <scope>GENOME REANNOTATION</scope>
    <source>
        <strain>cv. Nipponbare</strain>
    </source>
</reference>
<name>Y1154_ORYSJ</name>